<reference evidence="8" key="1">
    <citation type="journal article" date="2008" name="Nature">
        <title>Comparative genomics of the neglected human malaria parasite Plasmodium vivax.</title>
        <authorList>
            <person name="Carlton J.M."/>
            <person name="Adams J.H."/>
            <person name="Silva J.C."/>
            <person name="Bidwell S.L."/>
            <person name="Lorenzi H."/>
            <person name="Caler E."/>
            <person name="Crabtree J."/>
            <person name="Angiuoli S.V."/>
            <person name="Merino E.F."/>
            <person name="Amedeo P."/>
            <person name="Cheng Q."/>
            <person name="Coulson R.M.R."/>
            <person name="Crabb B.S."/>
            <person name="del Portillo H.A."/>
            <person name="Essien K."/>
            <person name="Feldblyum T.V."/>
            <person name="Fernandez-Becerra C."/>
            <person name="Gilson P.R."/>
            <person name="Gueye A.H."/>
            <person name="Guo X."/>
            <person name="Kang'a S."/>
            <person name="Kooij T.W.A."/>
            <person name="Korsinczky M."/>
            <person name="Meyer E.V.-S."/>
            <person name="Nene V."/>
            <person name="Paulsen I."/>
            <person name="White O."/>
            <person name="Ralph S.A."/>
            <person name="Ren Q."/>
            <person name="Sargeant T.J."/>
            <person name="Salzberg S.L."/>
            <person name="Stoeckert C.J."/>
            <person name="Sullivan S.A."/>
            <person name="Yamamoto M.M."/>
            <person name="Hoffman S.L."/>
            <person name="Wortman J.R."/>
            <person name="Gardner M.J."/>
            <person name="Galinski M.R."/>
            <person name="Barnwell J.W."/>
            <person name="Fraser-Liggett C.M."/>
        </authorList>
    </citation>
    <scope>NUCLEOTIDE SEQUENCE [LARGE SCALE GENOMIC DNA]</scope>
    <source>
        <strain evidence="8">Salvador I</strain>
    </source>
</reference>
<reference evidence="6" key="2">
    <citation type="journal article" date="2016" name="Int. J. Parasitol. Drugs Drug Resist.">
        <title>Targeting the Plasmodium vivax equilibrative nucleoside transporter 1 (PvENT1) for antimalarial drug development.</title>
        <authorList>
            <person name="Deniskin R."/>
            <person name="Frame I.J."/>
            <person name="Sosa Y."/>
            <person name="Akabas M.H."/>
        </authorList>
    </citation>
    <scope>FUNCTION</scope>
    <scope>TRANSPORTER ACTIVITY</scope>
    <scope>VARIANTS GLU-23; ILE-99; LYS-178; MET-188; SER-329 AND LYS-367</scope>
    <source>
        <strain evidence="5">Salvador I</strain>
    </source>
</reference>
<evidence type="ECO:0000250" key="1">
    <source>
        <dbReference type="UniProtKB" id="Q8IDM6"/>
    </source>
</evidence>
<evidence type="ECO:0000255" key="2"/>
<evidence type="ECO:0000256" key="3">
    <source>
        <dbReference type="SAM" id="MobiDB-lite"/>
    </source>
</evidence>
<evidence type="ECO:0000269" key="4">
    <source>
    </source>
</evidence>
<evidence type="ECO:0000303" key="5">
    <source>
    </source>
</evidence>
<evidence type="ECO:0000305" key="6"/>
<evidence type="ECO:0000312" key="7">
    <source>
        <dbReference type="EMBL" id="EDL44524.1"/>
    </source>
</evidence>
<evidence type="ECO:0000312" key="8">
    <source>
        <dbReference type="Proteomes" id="UP000008333"/>
    </source>
</evidence>
<accession>A5K8B0</accession>
<feature type="chain" id="PRO_0000461081" description="Nucleoside transporter 1">
    <location>
        <begin position="1"/>
        <end position="416"/>
    </location>
</feature>
<feature type="topological domain" description="Cytoplasmic" evidence="6">
    <location>
        <begin position="1"/>
        <end position="35"/>
    </location>
</feature>
<feature type="transmembrane region" description="Helical" evidence="2">
    <location>
        <begin position="36"/>
        <end position="58"/>
    </location>
</feature>
<feature type="topological domain" description="Extracellular" evidence="6">
    <location>
        <begin position="59"/>
        <end position="64"/>
    </location>
</feature>
<feature type="transmembrane region" description="Helical" evidence="2">
    <location>
        <begin position="65"/>
        <end position="83"/>
    </location>
</feature>
<feature type="topological domain" description="Cytoplasmic" evidence="6">
    <location>
        <begin position="84"/>
        <end position="87"/>
    </location>
</feature>
<feature type="transmembrane region" description="Helical" evidence="2">
    <location>
        <begin position="88"/>
        <end position="107"/>
    </location>
</feature>
<feature type="topological domain" description="Extracellular" evidence="6">
    <location>
        <begin position="108"/>
        <end position="119"/>
    </location>
</feature>
<feature type="transmembrane region" description="Helical" evidence="2">
    <location>
        <begin position="120"/>
        <end position="139"/>
    </location>
</feature>
<feature type="topological domain" description="Cytoplasmic" evidence="6">
    <location>
        <begin position="140"/>
        <end position="148"/>
    </location>
</feature>
<feature type="transmembrane region" description="Helical" evidence="2">
    <location>
        <begin position="149"/>
        <end position="171"/>
    </location>
</feature>
<feature type="topological domain" description="Extracellular" evidence="6">
    <location>
        <begin position="172"/>
        <end position="187"/>
    </location>
</feature>
<feature type="transmembrane region" description="Helical" evidence="2">
    <location>
        <begin position="188"/>
        <end position="210"/>
    </location>
</feature>
<feature type="topological domain" description="Cytoplasmic" evidence="6">
    <location>
        <begin position="211"/>
        <end position="241"/>
    </location>
</feature>
<feature type="transmembrane region" description="Helical" evidence="2">
    <location>
        <begin position="242"/>
        <end position="261"/>
    </location>
</feature>
<feature type="topological domain" description="Extracellular" evidence="6">
    <location>
        <begin position="262"/>
        <end position="273"/>
    </location>
</feature>
<feature type="transmembrane region" description="Helical" evidence="2">
    <location>
        <begin position="274"/>
        <end position="292"/>
    </location>
</feature>
<feature type="topological domain" description="Cytoplasmic" evidence="6">
    <location>
        <begin position="293"/>
        <end position="311"/>
    </location>
</feature>
<feature type="transmembrane region" description="Helical" evidence="2">
    <location>
        <begin position="312"/>
        <end position="331"/>
    </location>
</feature>
<feature type="topological domain" description="Extracellular" evidence="6">
    <location>
        <begin position="332"/>
        <end position="343"/>
    </location>
</feature>
<feature type="transmembrane region" description="Helical" evidence="2">
    <location>
        <begin position="344"/>
        <end position="366"/>
    </location>
</feature>
<feature type="topological domain" description="Cytoplasmic" evidence="6">
    <location>
        <begin position="367"/>
        <end position="380"/>
    </location>
</feature>
<feature type="transmembrane region" description="Helical" evidence="2">
    <location>
        <begin position="381"/>
        <end position="403"/>
    </location>
</feature>
<feature type="topological domain" description="Extracellular" evidence="6">
    <location>
        <begin position="404"/>
        <end position="416"/>
    </location>
</feature>
<feature type="region of interest" description="Disordered" evidence="3">
    <location>
        <begin position="1"/>
        <end position="28"/>
    </location>
</feature>
<feature type="compositionally biased region" description="Basic and acidic residues" evidence="3">
    <location>
        <begin position="1"/>
        <end position="26"/>
    </location>
</feature>
<feature type="sequence variant" description="No significant growth defects in adenosine-dependent proliferation assay when transporter expressed in purine auxotrophic yeast strain." evidence="4">
    <original>D</original>
    <variation>E</variation>
    <location>
        <position position="23"/>
    </location>
</feature>
<feature type="sequence variant" description="No significant growth defects in adenosine-dependent proliferation assay when transporter expressed in purine auxotrophic yeast strain; when associated with K-367." evidence="4">
    <original>M</original>
    <variation>I</variation>
    <location>
        <position position="99"/>
    </location>
</feature>
<feature type="sequence variant" description="No significant growth defects in adenosine-dependent proliferation assay when transporter expressed in purine auxotrophic yeast strain." evidence="4">
    <original>Q</original>
    <variation>K</variation>
    <location>
        <position position="178"/>
    </location>
</feature>
<feature type="sequence variant" description="No significant growth defects in adenosine-dependent proliferation assay when transporter expressed in purine auxotrophic yeast strain." evidence="4">
    <original>L</original>
    <variation>M</variation>
    <location>
        <position position="188"/>
    </location>
</feature>
<feature type="sequence variant" description="Results in significant growth defects in adenosine-dependent proliferation assay when transporter expressed in purine auxotrophic yeast strain." evidence="4">
    <original>N</original>
    <variation>S</variation>
    <location>
        <position position="329"/>
    </location>
</feature>
<feature type="sequence variant" description="No significant growth defects in adenosine-dependent proliferation assay when transporter expressed in purine auxotrophic yeast strain; when associated with I-99." evidence="4">
    <original>Q</original>
    <variation>K</variation>
    <location>
        <position position="367"/>
    </location>
</feature>
<gene>
    <name evidence="7" type="ORF">PVX_083260</name>
</gene>
<sequence length="416" mass="47009">MSISKESSKTMIDIEKKGGEGKDGKGGSKMTKNEQFLLPFTFILIGLSSLNVWNTALGLNINFKYNTFQITGLVCSSIIALFVKVPKMLLPFALGGLAMLCAGFQIAHQCFTFEQFDTYCLIAFIVIGIMAGLAQTIAFSVGTTMEENMGGYMSAGIGISGVFIFIINLLLDQIVPDQKKFNVNEAKLLYLFLICELCLVLAIIFSVCNLELSSSKTSKEEEYSDKEQGLSYLELLKDSYKAILAMFLVNWLSLQLFPGVGHKKWQESHNISDYNVTLIVGMFQVFDFVSRYPPNLSHMKIFKWFTFSLNKLLLLNFLRLLFIPWFVINAACDLPIFTNIVQQCVCMAMLAFTNGWFNTVPFLVFVQELKKAKKKKDIETISTFLVVAMFVGLFMGIWTTYIYDFFPIVIKRYVVP</sequence>
<comment type="function">
    <text evidence="4">Nucleoside and nucleobase transporter with a broad substrate specificity.</text>
</comment>
<comment type="catalytic activity">
    <reaction evidence="1">
        <text>inosine(in) = inosine(out)</text>
        <dbReference type="Rhea" id="RHEA:75375"/>
        <dbReference type="ChEBI" id="CHEBI:17596"/>
    </reaction>
    <physiologicalReaction direction="right-to-left" evidence="1">
        <dbReference type="Rhea" id="RHEA:75377"/>
    </physiologicalReaction>
</comment>
<comment type="catalytic activity">
    <reaction evidence="4">
        <text>adenosine(in) = adenosine(out)</text>
        <dbReference type="Rhea" id="RHEA:75343"/>
        <dbReference type="ChEBI" id="CHEBI:16335"/>
    </reaction>
    <physiologicalReaction direction="right-to-left" evidence="1">
        <dbReference type="Rhea" id="RHEA:75345"/>
    </physiologicalReaction>
</comment>
<comment type="catalytic activity">
    <reaction evidence="1">
        <text>hypoxanthine(out) = hypoxanthine(in)</text>
        <dbReference type="Rhea" id="RHEA:71515"/>
        <dbReference type="ChEBI" id="CHEBI:17368"/>
    </reaction>
</comment>
<comment type="catalytic activity">
    <reaction evidence="1">
        <text>guanosine(in) = guanosine(out)</text>
        <dbReference type="Rhea" id="RHEA:75371"/>
        <dbReference type="ChEBI" id="CHEBI:16750"/>
    </reaction>
    <physiologicalReaction direction="right-to-left" evidence="1">
        <dbReference type="Rhea" id="RHEA:75373"/>
    </physiologicalReaction>
</comment>
<comment type="catalytic activity">
    <reaction evidence="1">
        <text>guanine(out) = guanine(in)</text>
        <dbReference type="Rhea" id="RHEA:71531"/>
        <dbReference type="ChEBI" id="CHEBI:16235"/>
    </reaction>
</comment>
<comment type="catalytic activity">
    <reaction evidence="1">
        <text>thymidine(in) = thymidine(out)</text>
        <dbReference type="Rhea" id="RHEA:75363"/>
        <dbReference type="ChEBI" id="CHEBI:17748"/>
    </reaction>
    <physiologicalReaction direction="right-to-left" evidence="1">
        <dbReference type="Rhea" id="RHEA:75365"/>
    </physiologicalReaction>
</comment>
<comment type="catalytic activity">
    <reaction evidence="4">
        <text>uridine(out) = uridine(in)</text>
        <dbReference type="Rhea" id="RHEA:71519"/>
        <dbReference type="ChEBI" id="CHEBI:16704"/>
    </reaction>
</comment>
<comment type="catalytic activity">
    <reaction evidence="1">
        <text>uracil(in) = uracil(out)</text>
        <dbReference type="Rhea" id="RHEA:69404"/>
        <dbReference type="ChEBI" id="CHEBI:17568"/>
    </reaction>
    <physiologicalReaction direction="right-to-left" evidence="1">
        <dbReference type="Rhea" id="RHEA:69406"/>
    </physiologicalReaction>
</comment>
<comment type="catalytic activity">
    <reaction evidence="1">
        <text>thymine(out) = thymine(in)</text>
        <dbReference type="Rhea" id="RHEA:71527"/>
        <dbReference type="ChEBI" id="CHEBI:17821"/>
    </reaction>
</comment>
<comment type="catalytic activity">
    <reaction evidence="1">
        <text>adenine(out) = adenine(in)</text>
        <dbReference type="Rhea" id="RHEA:71523"/>
        <dbReference type="ChEBI" id="CHEBI:16708"/>
    </reaction>
</comment>
<comment type="catalytic activity">
    <reaction evidence="1">
        <text>cytosine(out) = cytosine(in)</text>
        <dbReference type="Rhea" id="RHEA:76639"/>
        <dbReference type="ChEBI" id="CHEBI:16040"/>
    </reaction>
</comment>
<comment type="catalytic activity">
    <reaction evidence="1">
        <text>xanthine(out) = xanthine(in)</text>
        <dbReference type="Rhea" id="RHEA:76643"/>
        <dbReference type="ChEBI" id="CHEBI:17712"/>
    </reaction>
</comment>
<comment type="subcellular location">
    <subcellularLocation>
        <location evidence="1">Cell membrane</location>
        <topology evidence="2">Multi-pass membrane protein</topology>
    </subcellularLocation>
</comment>
<comment type="miscellaneous">
    <text evidence="4">In contrast to the human transporter SLC29A1, has low sensitivity to the inhibitor nitrobenzylmercaptopurine riboside (NBMPR) and dipyridamole.</text>
</comment>
<comment type="similarity">
    <text evidence="6">Belongs to the SLC29A/ENT transporter (TC 2.A.57) family.</text>
</comment>
<name>ENT1_PLAVS</name>
<protein>
    <recommendedName>
        <fullName evidence="6">Nucleoside transporter 1</fullName>
    </recommendedName>
    <alternativeName>
        <fullName evidence="5">Equilibrative Nucleoside Transporter Type 1</fullName>
        <shortName evidence="5">PvENT1</shortName>
    </alternativeName>
</protein>
<keyword id="KW-1003">Cell membrane</keyword>
<keyword id="KW-0472">Membrane</keyword>
<keyword id="KW-1185">Reference proteome</keyword>
<keyword id="KW-0812">Transmembrane</keyword>
<keyword id="KW-1133">Transmembrane helix</keyword>
<keyword id="KW-0813">Transport</keyword>
<organism evidence="8">
    <name type="scientific">Plasmodium vivax (strain Salvador I)</name>
    <dbReference type="NCBI Taxonomy" id="126793"/>
    <lineage>
        <taxon>Eukaryota</taxon>
        <taxon>Sar</taxon>
        <taxon>Alveolata</taxon>
        <taxon>Apicomplexa</taxon>
        <taxon>Aconoidasida</taxon>
        <taxon>Haemosporida</taxon>
        <taxon>Plasmodiidae</taxon>
        <taxon>Plasmodium</taxon>
        <taxon>Plasmodium (Plasmodium)</taxon>
    </lineage>
</organism>
<dbReference type="EMBL" id="AAKM01000009">
    <property type="protein sequence ID" value="EDL44524.1"/>
    <property type="molecule type" value="Genomic_DNA"/>
</dbReference>
<dbReference type="RefSeq" id="XP_001614251.1">
    <property type="nucleotide sequence ID" value="XM_001614201.1"/>
</dbReference>
<dbReference type="SMR" id="A5K8B0"/>
<dbReference type="STRING" id="126793.A5K8B0"/>
<dbReference type="EnsemblProtists" id="EDL44524">
    <property type="protein sequence ID" value="EDL44524"/>
    <property type="gene ID" value="PVX_083260"/>
</dbReference>
<dbReference type="GeneID" id="5473536"/>
<dbReference type="KEGG" id="pvx:PVX_083260"/>
<dbReference type="VEuPathDB" id="PlasmoDB:PVX_083260"/>
<dbReference type="InParanoid" id="A5K8B0"/>
<dbReference type="OMA" id="MGIWTTY"/>
<dbReference type="PhylomeDB" id="A5K8B0"/>
<dbReference type="Proteomes" id="UP000008333">
    <property type="component" value="Chromosome 12"/>
</dbReference>
<dbReference type="GO" id="GO:0005886">
    <property type="term" value="C:plasma membrane"/>
    <property type="evidence" value="ECO:0007669"/>
    <property type="project" value="UniProtKB-SubCell"/>
</dbReference>
<dbReference type="GO" id="GO:0005337">
    <property type="term" value="F:nucleoside transmembrane transporter activity"/>
    <property type="evidence" value="ECO:0007669"/>
    <property type="project" value="InterPro"/>
</dbReference>
<dbReference type="InterPro" id="IPR002259">
    <property type="entry name" value="Eqnu_transpt"/>
</dbReference>
<dbReference type="InterPro" id="IPR036259">
    <property type="entry name" value="MFS_trans_sf"/>
</dbReference>
<dbReference type="PANTHER" id="PTHR10332">
    <property type="entry name" value="EQUILIBRATIVE NUCLEOSIDE TRANSPORTER"/>
    <property type="match status" value="1"/>
</dbReference>
<dbReference type="PANTHER" id="PTHR10332:SF10">
    <property type="entry name" value="EQUILIBRATIVE NUCLEOSIDE TRANSPORTER 4"/>
    <property type="match status" value="1"/>
</dbReference>
<dbReference type="SUPFAM" id="SSF103473">
    <property type="entry name" value="MFS general substrate transporter"/>
    <property type="match status" value="1"/>
</dbReference>
<proteinExistence type="inferred from homology"/>